<sequence length="242" mass="26604">MIKMTGVQKFFDDFQALTDINLEVPAGQVVVVLGPSGSGKSTLCRTINRLETIEEGTIEIDGKLLPEEGKDLAKIRADVGMVFQSFNLFPHLTIKDNVTLGPMKVRKMKKSEANEVAMKLLERVGIANQAEKYPAQLSGGQQQRVAIARALAMNPKIMLFDEPTSALDPEMVNEVLDVMASLAKEGMTMVCVTHEMGFARRAADRVLFMSDGAIVEDSDPETFFTNPQTDRAKDFLGKILAH</sequence>
<organism>
    <name type="scientific">Corynebacterium efficiens (strain DSM 44549 / YS-314 / AJ 12310 / JCM 11189 / NBRC 100395)</name>
    <dbReference type="NCBI Taxonomy" id="196164"/>
    <lineage>
        <taxon>Bacteria</taxon>
        <taxon>Bacillati</taxon>
        <taxon>Actinomycetota</taxon>
        <taxon>Actinomycetes</taxon>
        <taxon>Mycobacteriales</taxon>
        <taxon>Corynebacteriaceae</taxon>
        <taxon>Corynebacterium</taxon>
    </lineage>
</organism>
<feature type="chain" id="PRO_0000092337" description="Glutamate transport ATP-binding protein GluA">
    <location>
        <begin position="1"/>
        <end position="242"/>
    </location>
</feature>
<feature type="domain" description="ABC transporter" evidence="2">
    <location>
        <begin position="2"/>
        <end position="236"/>
    </location>
</feature>
<feature type="binding site" evidence="2">
    <location>
        <begin position="34"/>
        <end position="41"/>
    </location>
    <ligand>
        <name>ATP</name>
        <dbReference type="ChEBI" id="CHEBI:30616"/>
    </ligand>
</feature>
<accession>Q8RQL7</accession>
<reference key="1">
    <citation type="submission" date="2002-04" db="EMBL/GenBank/DDBJ databases">
        <title>Corynebacterium efficiens gluA, gluB, gluC and gluD genes, complete CDS.</title>
        <authorList>
            <person name="Nonaka G."/>
            <person name="Kimura E."/>
            <person name="Kawahara Y."/>
            <person name="Sugimoto S."/>
        </authorList>
    </citation>
    <scope>NUCLEOTIDE SEQUENCE [GENOMIC DNA]</scope>
    <source>
        <strain>DSM 44549 / YS-314 / AJ 12310 / JCM 11189 / NBRC 100395</strain>
    </source>
</reference>
<reference key="2">
    <citation type="journal article" date="2003" name="Genome Res.">
        <title>Comparative complete genome sequence analysis of the amino acid replacements responsible for the thermostability of Corynebacterium efficiens.</title>
        <authorList>
            <person name="Nishio Y."/>
            <person name="Nakamura Y."/>
            <person name="Kawarabayasi Y."/>
            <person name="Usuda Y."/>
            <person name="Kimura E."/>
            <person name="Sugimoto S."/>
            <person name="Matsui K."/>
            <person name="Yamagishi A."/>
            <person name="Kikuchi H."/>
            <person name="Ikeo K."/>
            <person name="Gojobori T."/>
        </authorList>
    </citation>
    <scope>NUCLEOTIDE SEQUENCE [LARGE SCALE GENOMIC DNA]</scope>
    <source>
        <strain>DSM 44549 / YS-314 / AJ 12310 / JCM 11189 / NBRC 100395</strain>
    </source>
</reference>
<name>GLUA_COREF</name>
<protein>
    <recommendedName>
        <fullName evidence="1">Glutamate transport ATP-binding protein GluA</fullName>
        <ecNumber evidence="1">7.4.2.1</ecNumber>
    </recommendedName>
</protein>
<evidence type="ECO:0000250" key="1">
    <source>
        <dbReference type="UniProtKB" id="P48243"/>
    </source>
</evidence>
<evidence type="ECO:0000255" key="2">
    <source>
        <dbReference type="PROSITE-ProRule" id="PRU00434"/>
    </source>
</evidence>
<evidence type="ECO:0000303" key="3">
    <source ref="1"/>
</evidence>
<evidence type="ECO:0000305" key="4"/>
<gene>
    <name evidence="3" type="primary">gluA</name>
    <name type="ordered locus">CE1844</name>
</gene>
<comment type="function">
    <text evidence="1">Part of the ABC transporter complex GluABCD involved in glutamate uptake. Probably responsible for energy coupling to the transport system.</text>
</comment>
<comment type="catalytic activity">
    <reaction evidence="1">
        <text>a polar amino acid(out) + ATP + H2O = a polar amino acid(in) + ADP + phosphate + H(+)</text>
        <dbReference type="Rhea" id="RHEA:14673"/>
        <dbReference type="ChEBI" id="CHEBI:15377"/>
        <dbReference type="ChEBI" id="CHEBI:15378"/>
        <dbReference type="ChEBI" id="CHEBI:30616"/>
        <dbReference type="ChEBI" id="CHEBI:43474"/>
        <dbReference type="ChEBI" id="CHEBI:62031"/>
        <dbReference type="ChEBI" id="CHEBI:456216"/>
        <dbReference type="EC" id="7.4.2.1"/>
    </reaction>
    <physiologicalReaction direction="left-to-right" evidence="1">
        <dbReference type="Rhea" id="RHEA:14674"/>
    </physiologicalReaction>
</comment>
<comment type="catalytic activity">
    <reaction evidence="1">
        <text>L-glutamate(out) + ATP + H2O = L-glutamate(in) + ADP + phosphate + H(+)</text>
        <dbReference type="Rhea" id="RHEA:29035"/>
        <dbReference type="ChEBI" id="CHEBI:15377"/>
        <dbReference type="ChEBI" id="CHEBI:15378"/>
        <dbReference type="ChEBI" id="CHEBI:29985"/>
        <dbReference type="ChEBI" id="CHEBI:30616"/>
        <dbReference type="ChEBI" id="CHEBI:43474"/>
        <dbReference type="ChEBI" id="CHEBI:456216"/>
    </reaction>
    <physiologicalReaction direction="left-to-right" evidence="1">
        <dbReference type="Rhea" id="RHEA:29036"/>
    </physiologicalReaction>
</comment>
<comment type="subunit">
    <text evidence="1">The complex is composed of two ATP-binding proteins (GluA), two transmembrane proteins (GluC and GluD) and a solute-binding protein (GluB).</text>
</comment>
<comment type="subcellular location">
    <subcellularLocation>
        <location evidence="1">Cell membrane</location>
        <topology evidence="1">Peripheral membrane protein</topology>
    </subcellularLocation>
</comment>
<comment type="similarity">
    <text evidence="4">Belongs to the ABC transporter superfamily.</text>
</comment>
<comment type="sequence caution" evidence="4">
    <conflict type="erroneous initiation">
        <sequence resource="EMBL-CDS" id="BAC18654"/>
    </conflict>
</comment>
<proteinExistence type="inferred from homology"/>
<dbReference type="EC" id="7.4.2.1" evidence="1"/>
<dbReference type="EMBL" id="AB083297">
    <property type="protein sequence ID" value="BAB88898.1"/>
    <property type="molecule type" value="Genomic_DNA"/>
</dbReference>
<dbReference type="EMBL" id="BA000035">
    <property type="protein sequence ID" value="BAC18654.1"/>
    <property type="status" value="ALT_INIT"/>
    <property type="molecule type" value="Genomic_DNA"/>
</dbReference>
<dbReference type="RefSeq" id="WP_173362608.1">
    <property type="nucleotide sequence ID" value="NC_004369.1"/>
</dbReference>
<dbReference type="SMR" id="Q8RQL7"/>
<dbReference type="STRING" id="196164.gene:10742272"/>
<dbReference type="KEGG" id="cef:CE1844"/>
<dbReference type="eggNOG" id="COG1126">
    <property type="taxonomic scope" value="Bacteria"/>
</dbReference>
<dbReference type="HOGENOM" id="CLU_000604_1_22_11"/>
<dbReference type="Proteomes" id="UP000001409">
    <property type="component" value="Chromosome"/>
</dbReference>
<dbReference type="GO" id="GO:0005886">
    <property type="term" value="C:plasma membrane"/>
    <property type="evidence" value="ECO:0007669"/>
    <property type="project" value="UniProtKB-SubCell"/>
</dbReference>
<dbReference type="GO" id="GO:0015424">
    <property type="term" value="F:ABC-type amino acid transporter activity"/>
    <property type="evidence" value="ECO:0007669"/>
    <property type="project" value="InterPro"/>
</dbReference>
<dbReference type="GO" id="GO:0005524">
    <property type="term" value="F:ATP binding"/>
    <property type="evidence" value="ECO:0007669"/>
    <property type="project" value="UniProtKB-KW"/>
</dbReference>
<dbReference type="GO" id="GO:0016887">
    <property type="term" value="F:ATP hydrolysis activity"/>
    <property type="evidence" value="ECO:0007669"/>
    <property type="project" value="InterPro"/>
</dbReference>
<dbReference type="CDD" id="cd03262">
    <property type="entry name" value="ABC_HisP_GlnQ"/>
    <property type="match status" value="1"/>
</dbReference>
<dbReference type="FunFam" id="3.40.50.300:FF:000020">
    <property type="entry name" value="Amino acid ABC transporter ATP-binding component"/>
    <property type="match status" value="1"/>
</dbReference>
<dbReference type="Gene3D" id="3.40.50.300">
    <property type="entry name" value="P-loop containing nucleotide triphosphate hydrolases"/>
    <property type="match status" value="1"/>
</dbReference>
<dbReference type="InterPro" id="IPR003593">
    <property type="entry name" value="AAA+_ATPase"/>
</dbReference>
<dbReference type="InterPro" id="IPR030679">
    <property type="entry name" value="ABC_ATPase_HisP-typ"/>
</dbReference>
<dbReference type="InterPro" id="IPR003439">
    <property type="entry name" value="ABC_transporter-like_ATP-bd"/>
</dbReference>
<dbReference type="InterPro" id="IPR017871">
    <property type="entry name" value="ABC_transporter-like_CS"/>
</dbReference>
<dbReference type="InterPro" id="IPR050086">
    <property type="entry name" value="MetN_ABC_transporter-like"/>
</dbReference>
<dbReference type="InterPro" id="IPR027417">
    <property type="entry name" value="P-loop_NTPase"/>
</dbReference>
<dbReference type="PANTHER" id="PTHR43166">
    <property type="entry name" value="AMINO ACID IMPORT ATP-BINDING PROTEIN"/>
    <property type="match status" value="1"/>
</dbReference>
<dbReference type="PANTHER" id="PTHR43166:SF9">
    <property type="entry name" value="GLUTAMATE_ASPARTATE IMPORT ATP-BINDING PROTEIN GLTL"/>
    <property type="match status" value="1"/>
</dbReference>
<dbReference type="Pfam" id="PF00005">
    <property type="entry name" value="ABC_tran"/>
    <property type="match status" value="1"/>
</dbReference>
<dbReference type="PIRSF" id="PIRSF039085">
    <property type="entry name" value="ABC_ATPase_HisP"/>
    <property type="match status" value="1"/>
</dbReference>
<dbReference type="SMART" id="SM00382">
    <property type="entry name" value="AAA"/>
    <property type="match status" value="1"/>
</dbReference>
<dbReference type="SUPFAM" id="SSF52540">
    <property type="entry name" value="P-loop containing nucleoside triphosphate hydrolases"/>
    <property type="match status" value="1"/>
</dbReference>
<dbReference type="PROSITE" id="PS00211">
    <property type="entry name" value="ABC_TRANSPORTER_1"/>
    <property type="match status" value="1"/>
</dbReference>
<dbReference type="PROSITE" id="PS50893">
    <property type="entry name" value="ABC_TRANSPORTER_2"/>
    <property type="match status" value="1"/>
</dbReference>
<keyword id="KW-0029">Amino-acid transport</keyword>
<keyword id="KW-0067">ATP-binding</keyword>
<keyword id="KW-1003">Cell membrane</keyword>
<keyword id="KW-0472">Membrane</keyword>
<keyword id="KW-0547">Nucleotide-binding</keyword>
<keyword id="KW-1185">Reference proteome</keyword>
<keyword id="KW-1278">Translocase</keyword>
<keyword id="KW-0813">Transport</keyword>